<feature type="chain" id="PRO_0000311455" description="Putative iron-sulfur cluster insertion protein ErpA">
    <location>
        <begin position="1"/>
        <end position="123"/>
    </location>
</feature>
<feature type="binding site" evidence="1">
    <location>
        <position position="51"/>
    </location>
    <ligand>
        <name>iron-sulfur cluster</name>
        <dbReference type="ChEBI" id="CHEBI:30408"/>
    </ligand>
</feature>
<feature type="binding site" evidence="1">
    <location>
        <position position="115"/>
    </location>
    <ligand>
        <name>iron-sulfur cluster</name>
        <dbReference type="ChEBI" id="CHEBI:30408"/>
    </ligand>
</feature>
<feature type="binding site" evidence="1">
    <location>
        <position position="117"/>
    </location>
    <ligand>
        <name>iron-sulfur cluster</name>
        <dbReference type="ChEBI" id="CHEBI:30408"/>
    </ligand>
</feature>
<comment type="function">
    <text evidence="1">Required for insertion of 4Fe-4S clusters.</text>
</comment>
<comment type="cofactor">
    <cofactor evidence="1">
        <name>iron-sulfur cluster</name>
        <dbReference type="ChEBI" id="CHEBI:30408"/>
    </cofactor>
    <text evidence="1">Binds 1 iron-sulfur cluster per subunit.</text>
</comment>
<comment type="subunit">
    <text evidence="1">Homodimer.</text>
</comment>
<comment type="similarity">
    <text evidence="1">Belongs to the HesB/IscA family.</text>
</comment>
<organism>
    <name type="scientific">Burkholderia cenocepacia (strain HI2424)</name>
    <dbReference type="NCBI Taxonomy" id="331272"/>
    <lineage>
        <taxon>Bacteria</taxon>
        <taxon>Pseudomonadati</taxon>
        <taxon>Pseudomonadota</taxon>
        <taxon>Betaproteobacteria</taxon>
        <taxon>Burkholderiales</taxon>
        <taxon>Burkholderiaceae</taxon>
        <taxon>Burkholderia</taxon>
        <taxon>Burkholderia cepacia complex</taxon>
    </lineage>
</organism>
<sequence length="123" mass="13313">MNAVTETAATTTDMPLPFVFTDAAADKVKQLIDEEGNPDLKLRVFVQGGGCSGFQYGFTFDEEVNEDDTVMNKNGVQLLIDSMSYQYLVGAEIDYKDDLNGAQFVIKNPNATTTCGCGSSFSV</sequence>
<proteinExistence type="inferred from homology"/>
<evidence type="ECO:0000255" key="1">
    <source>
        <dbReference type="HAMAP-Rule" id="MF_01380"/>
    </source>
</evidence>
<name>ERPA_BURCH</name>
<reference key="1">
    <citation type="submission" date="2006-08" db="EMBL/GenBank/DDBJ databases">
        <title>Complete sequence of chromosome 1 of Burkholderia cenocepacia HI2424.</title>
        <authorList>
            <person name="Copeland A."/>
            <person name="Lucas S."/>
            <person name="Lapidus A."/>
            <person name="Barry K."/>
            <person name="Detter J.C."/>
            <person name="Glavina del Rio T."/>
            <person name="Hammon N."/>
            <person name="Israni S."/>
            <person name="Pitluck S."/>
            <person name="Chain P."/>
            <person name="Malfatti S."/>
            <person name="Shin M."/>
            <person name="Vergez L."/>
            <person name="Schmutz J."/>
            <person name="Larimer F."/>
            <person name="Land M."/>
            <person name="Hauser L."/>
            <person name="Kyrpides N."/>
            <person name="Kim E."/>
            <person name="LiPuma J.J."/>
            <person name="Gonzalez C.F."/>
            <person name="Konstantinidis K."/>
            <person name="Tiedje J.M."/>
            <person name="Richardson P."/>
        </authorList>
    </citation>
    <scope>NUCLEOTIDE SEQUENCE [LARGE SCALE GENOMIC DNA]</scope>
    <source>
        <strain>HI2424</strain>
    </source>
</reference>
<keyword id="KW-0408">Iron</keyword>
<keyword id="KW-0411">Iron-sulfur</keyword>
<keyword id="KW-0479">Metal-binding</keyword>
<accession>A0K4K7</accession>
<dbReference type="EMBL" id="CP000458">
    <property type="protein sequence ID" value="ABK07434.1"/>
    <property type="molecule type" value="Genomic_DNA"/>
</dbReference>
<dbReference type="RefSeq" id="WP_006476903.1">
    <property type="nucleotide sequence ID" value="NC_008542.1"/>
</dbReference>
<dbReference type="SMR" id="A0K4K7"/>
<dbReference type="GeneID" id="83047448"/>
<dbReference type="KEGG" id="bch:Bcen2424_0681"/>
<dbReference type="HOGENOM" id="CLU_069054_5_3_4"/>
<dbReference type="GO" id="GO:0051537">
    <property type="term" value="F:2 iron, 2 sulfur cluster binding"/>
    <property type="evidence" value="ECO:0007669"/>
    <property type="project" value="TreeGrafter"/>
</dbReference>
<dbReference type="GO" id="GO:0051539">
    <property type="term" value="F:4 iron, 4 sulfur cluster binding"/>
    <property type="evidence" value="ECO:0007669"/>
    <property type="project" value="TreeGrafter"/>
</dbReference>
<dbReference type="GO" id="GO:0005506">
    <property type="term" value="F:iron ion binding"/>
    <property type="evidence" value="ECO:0007669"/>
    <property type="project" value="UniProtKB-UniRule"/>
</dbReference>
<dbReference type="GO" id="GO:0016226">
    <property type="term" value="P:iron-sulfur cluster assembly"/>
    <property type="evidence" value="ECO:0007669"/>
    <property type="project" value="UniProtKB-UniRule"/>
</dbReference>
<dbReference type="FunFam" id="2.60.300.12:FF:000002">
    <property type="entry name" value="Iron-sulfur cluster insertion protein ErpA"/>
    <property type="match status" value="1"/>
</dbReference>
<dbReference type="Gene3D" id="2.60.300.12">
    <property type="entry name" value="HesB-like domain"/>
    <property type="match status" value="1"/>
</dbReference>
<dbReference type="HAMAP" id="MF_01380">
    <property type="entry name" value="Fe_S_insert_ErpA"/>
    <property type="match status" value="1"/>
</dbReference>
<dbReference type="InterPro" id="IPR000361">
    <property type="entry name" value="FeS_biogenesis"/>
</dbReference>
<dbReference type="InterPro" id="IPR016092">
    <property type="entry name" value="FeS_cluster_insertion"/>
</dbReference>
<dbReference type="InterPro" id="IPR017870">
    <property type="entry name" value="FeS_cluster_insertion_CS"/>
</dbReference>
<dbReference type="InterPro" id="IPR023063">
    <property type="entry name" value="FeS_cluster_insertion_RrpA"/>
</dbReference>
<dbReference type="InterPro" id="IPR035903">
    <property type="entry name" value="HesB-like_dom_sf"/>
</dbReference>
<dbReference type="NCBIfam" id="TIGR00049">
    <property type="entry name" value="iron-sulfur cluster assembly accessory protein"/>
    <property type="match status" value="1"/>
</dbReference>
<dbReference type="NCBIfam" id="NF010147">
    <property type="entry name" value="PRK13623.1"/>
    <property type="match status" value="1"/>
</dbReference>
<dbReference type="PANTHER" id="PTHR43011">
    <property type="entry name" value="IRON-SULFUR CLUSTER ASSEMBLY 2 HOMOLOG, MITOCHONDRIAL"/>
    <property type="match status" value="1"/>
</dbReference>
<dbReference type="PANTHER" id="PTHR43011:SF1">
    <property type="entry name" value="IRON-SULFUR CLUSTER ASSEMBLY 2 HOMOLOG, MITOCHONDRIAL"/>
    <property type="match status" value="1"/>
</dbReference>
<dbReference type="Pfam" id="PF01521">
    <property type="entry name" value="Fe-S_biosyn"/>
    <property type="match status" value="1"/>
</dbReference>
<dbReference type="SUPFAM" id="SSF89360">
    <property type="entry name" value="HesB-like domain"/>
    <property type="match status" value="1"/>
</dbReference>
<dbReference type="PROSITE" id="PS01152">
    <property type="entry name" value="HESB"/>
    <property type="match status" value="1"/>
</dbReference>
<protein>
    <recommendedName>
        <fullName evidence="1">Putative iron-sulfur cluster insertion protein ErpA</fullName>
    </recommendedName>
</protein>
<gene>
    <name evidence="1" type="primary">erpA</name>
    <name type="ordered locus">Bcen2424_0681</name>
</gene>